<evidence type="ECO:0000255" key="1">
    <source>
        <dbReference type="HAMAP-Rule" id="MF_01815"/>
    </source>
</evidence>
<sequence>MYSKILGTGSYLPSQIRTNADLEKMVETSDEWIVARTGIKERRIAAENETVADMGFYAAQNAIEMAGIDKNDIDLIIVATTSGSHTFPSSACQVQAKLGIKGCPAFARAAACSGFVYALSIADQHIKTGMCKNVLVIGSDTLSKTCDPTDRSTIILFGDGAGAVVVGASEEPGILSTHIYADGEFGDLLSLEVPERGKDADKWLHMAGNEVFKVAVTQLSKLVKDTLEANGMHKSELDWLVPHQANYRIISATAKKLSMSLDQVVITLDRHGNTSAATVPTALDEAVRDGRIQRGQTLLLEAFGGGFTWGSALVRF</sequence>
<feature type="chain" id="PRO_0000110506" description="Beta-ketoacyl-[acyl-carrier-protein] synthase III 1">
    <location>
        <begin position="1"/>
        <end position="316"/>
    </location>
</feature>
<feature type="region of interest" description="ACP-binding" evidence="1">
    <location>
        <begin position="244"/>
        <end position="248"/>
    </location>
</feature>
<feature type="active site" evidence="1">
    <location>
        <position position="112"/>
    </location>
</feature>
<feature type="active site" evidence="1">
    <location>
        <position position="243"/>
    </location>
</feature>
<feature type="active site" evidence="1">
    <location>
        <position position="273"/>
    </location>
</feature>
<protein>
    <recommendedName>
        <fullName evidence="1">Beta-ketoacyl-[acyl-carrier-protein] synthase III 1</fullName>
        <shortName evidence="1">Beta-ketoacyl-ACP synthase III 1</shortName>
        <shortName evidence="1">KAS III 1</shortName>
        <ecNumber evidence="1">2.3.1.180</ecNumber>
    </recommendedName>
    <alternativeName>
        <fullName evidence="1">3-oxoacyl-[acyl-carrier-protein] synthase 3 1</fullName>
    </alternativeName>
    <alternativeName>
        <fullName evidence="1">3-oxoacyl-[acyl-carrier-protein] synthase III 1</fullName>
    </alternativeName>
</protein>
<name>FABH1_VIBVU</name>
<keyword id="KW-0012">Acyltransferase</keyword>
<keyword id="KW-0963">Cytoplasm</keyword>
<keyword id="KW-0275">Fatty acid biosynthesis</keyword>
<keyword id="KW-0276">Fatty acid metabolism</keyword>
<keyword id="KW-0444">Lipid biosynthesis</keyword>
<keyword id="KW-0443">Lipid metabolism</keyword>
<keyword id="KW-0511">Multifunctional enzyme</keyword>
<keyword id="KW-0808">Transferase</keyword>
<organism>
    <name type="scientific">Vibrio vulnificus (strain CMCP6)</name>
    <dbReference type="NCBI Taxonomy" id="216895"/>
    <lineage>
        <taxon>Bacteria</taxon>
        <taxon>Pseudomonadati</taxon>
        <taxon>Pseudomonadota</taxon>
        <taxon>Gammaproteobacteria</taxon>
        <taxon>Vibrionales</taxon>
        <taxon>Vibrionaceae</taxon>
        <taxon>Vibrio</taxon>
    </lineage>
</organism>
<dbReference type="EC" id="2.3.1.180" evidence="1"/>
<dbReference type="EMBL" id="AE016795">
    <property type="protein sequence ID" value="AAO11338.2"/>
    <property type="molecule type" value="Genomic_DNA"/>
</dbReference>
<dbReference type="RefSeq" id="WP_011080821.1">
    <property type="nucleotide sequence ID" value="NC_004459.3"/>
</dbReference>
<dbReference type="SMR" id="Q8D8G6"/>
<dbReference type="KEGG" id="vvu:VV1_3011"/>
<dbReference type="HOGENOM" id="CLU_039592_4_1_6"/>
<dbReference type="UniPathway" id="UPA00094"/>
<dbReference type="Proteomes" id="UP000002275">
    <property type="component" value="Chromosome 1"/>
</dbReference>
<dbReference type="GO" id="GO:0005737">
    <property type="term" value="C:cytoplasm"/>
    <property type="evidence" value="ECO:0007669"/>
    <property type="project" value="UniProtKB-SubCell"/>
</dbReference>
<dbReference type="GO" id="GO:0004315">
    <property type="term" value="F:3-oxoacyl-[acyl-carrier-protein] synthase activity"/>
    <property type="evidence" value="ECO:0007669"/>
    <property type="project" value="InterPro"/>
</dbReference>
<dbReference type="GO" id="GO:0033818">
    <property type="term" value="F:beta-ketoacyl-acyl-carrier-protein synthase III activity"/>
    <property type="evidence" value="ECO:0007669"/>
    <property type="project" value="UniProtKB-UniRule"/>
</dbReference>
<dbReference type="GO" id="GO:0006633">
    <property type="term" value="P:fatty acid biosynthetic process"/>
    <property type="evidence" value="ECO:0007669"/>
    <property type="project" value="UniProtKB-UniRule"/>
</dbReference>
<dbReference type="CDD" id="cd00830">
    <property type="entry name" value="KAS_III"/>
    <property type="match status" value="1"/>
</dbReference>
<dbReference type="FunFam" id="3.40.47.10:FF:000004">
    <property type="entry name" value="3-oxoacyl-[acyl-carrier-protein] synthase 3"/>
    <property type="match status" value="1"/>
</dbReference>
<dbReference type="Gene3D" id="3.40.47.10">
    <property type="match status" value="1"/>
</dbReference>
<dbReference type="HAMAP" id="MF_01815">
    <property type="entry name" value="FabH"/>
    <property type="match status" value="1"/>
</dbReference>
<dbReference type="InterPro" id="IPR013747">
    <property type="entry name" value="ACP_syn_III_C"/>
</dbReference>
<dbReference type="InterPro" id="IPR013751">
    <property type="entry name" value="ACP_syn_III_N"/>
</dbReference>
<dbReference type="InterPro" id="IPR004655">
    <property type="entry name" value="FabH"/>
</dbReference>
<dbReference type="InterPro" id="IPR016039">
    <property type="entry name" value="Thiolase-like"/>
</dbReference>
<dbReference type="NCBIfam" id="TIGR00747">
    <property type="entry name" value="fabH"/>
    <property type="match status" value="1"/>
</dbReference>
<dbReference type="NCBIfam" id="NF006829">
    <property type="entry name" value="PRK09352.1"/>
    <property type="match status" value="1"/>
</dbReference>
<dbReference type="PANTHER" id="PTHR43091">
    <property type="entry name" value="3-OXOACYL-[ACYL-CARRIER-PROTEIN] SYNTHASE"/>
    <property type="match status" value="1"/>
</dbReference>
<dbReference type="PANTHER" id="PTHR43091:SF1">
    <property type="entry name" value="BETA-KETOACYL-[ACYL-CARRIER-PROTEIN] SYNTHASE III, CHLOROPLASTIC"/>
    <property type="match status" value="1"/>
</dbReference>
<dbReference type="Pfam" id="PF08545">
    <property type="entry name" value="ACP_syn_III"/>
    <property type="match status" value="1"/>
</dbReference>
<dbReference type="Pfam" id="PF08541">
    <property type="entry name" value="ACP_syn_III_C"/>
    <property type="match status" value="1"/>
</dbReference>
<dbReference type="SUPFAM" id="SSF53901">
    <property type="entry name" value="Thiolase-like"/>
    <property type="match status" value="1"/>
</dbReference>
<proteinExistence type="inferred from homology"/>
<reference key="1">
    <citation type="submission" date="2002-12" db="EMBL/GenBank/DDBJ databases">
        <title>Complete genome sequence of Vibrio vulnificus CMCP6.</title>
        <authorList>
            <person name="Rhee J.H."/>
            <person name="Kim S.Y."/>
            <person name="Chung S.S."/>
            <person name="Kim J.J."/>
            <person name="Moon Y.H."/>
            <person name="Jeong H."/>
            <person name="Choy H.E."/>
        </authorList>
    </citation>
    <scope>NUCLEOTIDE SEQUENCE [LARGE SCALE GENOMIC DNA]</scope>
    <source>
        <strain>CMCP6</strain>
    </source>
</reference>
<reference key="2">
    <citation type="journal article" date="2011" name="Mol. Syst. Biol.">
        <title>Integrative genome-scale metabolic analysis of Vibrio vulnificus for drug targeting and discovery.</title>
        <authorList>
            <person name="Kim H.U."/>
            <person name="Kim S.Y."/>
            <person name="Jeong H."/>
            <person name="Kim T.Y."/>
            <person name="Kim J.J."/>
            <person name="Choy H.E."/>
            <person name="Yi K.Y."/>
            <person name="Rhee J.H."/>
            <person name="Lee S.Y."/>
        </authorList>
    </citation>
    <scope>SEQUENCE REVISION TO 107-108</scope>
    <source>
        <strain>CMCP6</strain>
    </source>
</reference>
<comment type="function">
    <text evidence="1">Catalyzes the condensation reaction of fatty acid synthesis by the addition to an acyl acceptor of two carbons from malonyl-ACP. Catalyzes the first condensation reaction which initiates fatty acid synthesis and may therefore play a role in governing the total rate of fatty acid production. Possesses both acetoacetyl-ACP synthase and acetyl transacylase activities. Its substrate specificity determines the biosynthesis of branched-chain and/or straight-chain of fatty acids.</text>
</comment>
<comment type="catalytic activity">
    <reaction evidence="1">
        <text>malonyl-[ACP] + acetyl-CoA + H(+) = 3-oxobutanoyl-[ACP] + CO2 + CoA</text>
        <dbReference type="Rhea" id="RHEA:12080"/>
        <dbReference type="Rhea" id="RHEA-COMP:9623"/>
        <dbReference type="Rhea" id="RHEA-COMP:9625"/>
        <dbReference type="ChEBI" id="CHEBI:15378"/>
        <dbReference type="ChEBI" id="CHEBI:16526"/>
        <dbReference type="ChEBI" id="CHEBI:57287"/>
        <dbReference type="ChEBI" id="CHEBI:57288"/>
        <dbReference type="ChEBI" id="CHEBI:78449"/>
        <dbReference type="ChEBI" id="CHEBI:78450"/>
        <dbReference type="EC" id="2.3.1.180"/>
    </reaction>
</comment>
<comment type="pathway">
    <text evidence="1">Lipid metabolism; fatty acid biosynthesis.</text>
</comment>
<comment type="subunit">
    <text evidence="1">Homodimer.</text>
</comment>
<comment type="subcellular location">
    <subcellularLocation>
        <location evidence="1">Cytoplasm</location>
    </subcellularLocation>
</comment>
<comment type="domain">
    <text evidence="1">The last Arg residue of the ACP-binding site is essential for the weak association between ACP/AcpP and FabH.</text>
</comment>
<comment type="similarity">
    <text evidence="1">Belongs to the thiolase-like superfamily. FabH family.</text>
</comment>
<gene>
    <name evidence="1" type="primary">fabH1</name>
    <name type="ordered locus">VV1_3011</name>
</gene>
<accession>Q8D8G6</accession>